<organism>
    <name type="scientific">Haemophilus influenzae (strain ATCC 51907 / DSM 11121 / KW20 / Rd)</name>
    <dbReference type="NCBI Taxonomy" id="71421"/>
    <lineage>
        <taxon>Bacteria</taxon>
        <taxon>Pseudomonadati</taxon>
        <taxon>Pseudomonadota</taxon>
        <taxon>Gammaproteobacteria</taxon>
        <taxon>Pasteurellales</taxon>
        <taxon>Pasteurellaceae</taxon>
        <taxon>Haemophilus</taxon>
    </lineage>
</organism>
<evidence type="ECO:0000250" key="1"/>
<evidence type="ECO:0000255" key="2">
    <source>
        <dbReference type="HAMAP-Rule" id="MF_01320"/>
    </source>
</evidence>
<evidence type="ECO:0000256" key="3">
    <source>
        <dbReference type="SAM" id="MobiDB-lite"/>
    </source>
</evidence>
<evidence type="ECO:0000305" key="4"/>
<dbReference type="EMBL" id="L42023">
    <property type="protein sequence ID" value="AAC22439.1"/>
    <property type="molecule type" value="Genomic_DNA"/>
</dbReference>
<dbReference type="PIR" id="H64092">
    <property type="entry name" value="H64092"/>
</dbReference>
<dbReference type="RefSeq" id="NP_438939.1">
    <property type="nucleotide sequence ID" value="NC_000907.1"/>
</dbReference>
<dbReference type="SMR" id="P44343"/>
<dbReference type="STRING" id="71421.HI_0780"/>
<dbReference type="EnsemblBacteria" id="AAC22439">
    <property type="protein sequence ID" value="AAC22439"/>
    <property type="gene ID" value="HI_0780"/>
</dbReference>
<dbReference type="KEGG" id="hin:HI_0780"/>
<dbReference type="PATRIC" id="fig|71421.8.peg.819"/>
<dbReference type="eggNOG" id="COG0090">
    <property type="taxonomic scope" value="Bacteria"/>
</dbReference>
<dbReference type="HOGENOM" id="CLU_036235_2_1_6"/>
<dbReference type="OrthoDB" id="9778722at2"/>
<dbReference type="PhylomeDB" id="P44343"/>
<dbReference type="BioCyc" id="HINF71421:G1GJ1-820-MONOMER"/>
<dbReference type="Proteomes" id="UP000000579">
    <property type="component" value="Chromosome"/>
</dbReference>
<dbReference type="GO" id="GO:0022625">
    <property type="term" value="C:cytosolic large ribosomal subunit"/>
    <property type="evidence" value="ECO:0000318"/>
    <property type="project" value="GO_Central"/>
</dbReference>
<dbReference type="GO" id="GO:0003723">
    <property type="term" value="F:RNA binding"/>
    <property type="evidence" value="ECO:0000318"/>
    <property type="project" value="GO_Central"/>
</dbReference>
<dbReference type="GO" id="GO:0019843">
    <property type="term" value="F:rRNA binding"/>
    <property type="evidence" value="ECO:0007669"/>
    <property type="project" value="UniProtKB-UniRule"/>
</dbReference>
<dbReference type="GO" id="GO:0003735">
    <property type="term" value="F:structural constituent of ribosome"/>
    <property type="evidence" value="ECO:0000318"/>
    <property type="project" value="GO_Central"/>
</dbReference>
<dbReference type="GO" id="GO:0016740">
    <property type="term" value="F:transferase activity"/>
    <property type="evidence" value="ECO:0007669"/>
    <property type="project" value="InterPro"/>
</dbReference>
<dbReference type="GO" id="GO:0002181">
    <property type="term" value="P:cytoplasmic translation"/>
    <property type="evidence" value="ECO:0000318"/>
    <property type="project" value="GO_Central"/>
</dbReference>
<dbReference type="FunFam" id="2.30.30.30:FF:000001">
    <property type="entry name" value="50S ribosomal protein L2"/>
    <property type="match status" value="1"/>
</dbReference>
<dbReference type="FunFam" id="2.40.50.140:FF:000003">
    <property type="entry name" value="50S ribosomal protein L2"/>
    <property type="match status" value="1"/>
</dbReference>
<dbReference type="FunFam" id="4.10.950.10:FF:000001">
    <property type="entry name" value="50S ribosomal protein L2"/>
    <property type="match status" value="1"/>
</dbReference>
<dbReference type="Gene3D" id="2.30.30.30">
    <property type="match status" value="1"/>
</dbReference>
<dbReference type="Gene3D" id="2.40.50.140">
    <property type="entry name" value="Nucleic acid-binding proteins"/>
    <property type="match status" value="1"/>
</dbReference>
<dbReference type="Gene3D" id="4.10.950.10">
    <property type="entry name" value="Ribosomal protein L2, domain 3"/>
    <property type="match status" value="1"/>
</dbReference>
<dbReference type="HAMAP" id="MF_01320_B">
    <property type="entry name" value="Ribosomal_uL2_B"/>
    <property type="match status" value="1"/>
</dbReference>
<dbReference type="InterPro" id="IPR012340">
    <property type="entry name" value="NA-bd_OB-fold"/>
</dbReference>
<dbReference type="InterPro" id="IPR014722">
    <property type="entry name" value="Rib_uL2_dom2"/>
</dbReference>
<dbReference type="InterPro" id="IPR002171">
    <property type="entry name" value="Ribosomal_uL2"/>
</dbReference>
<dbReference type="InterPro" id="IPR005880">
    <property type="entry name" value="Ribosomal_uL2_bac/org-type"/>
</dbReference>
<dbReference type="InterPro" id="IPR022669">
    <property type="entry name" value="Ribosomal_uL2_C"/>
</dbReference>
<dbReference type="InterPro" id="IPR022671">
    <property type="entry name" value="Ribosomal_uL2_CS"/>
</dbReference>
<dbReference type="InterPro" id="IPR014726">
    <property type="entry name" value="Ribosomal_uL2_dom3"/>
</dbReference>
<dbReference type="InterPro" id="IPR022666">
    <property type="entry name" value="Ribosomal_uL2_RNA-bd_dom"/>
</dbReference>
<dbReference type="InterPro" id="IPR008991">
    <property type="entry name" value="Translation_prot_SH3-like_sf"/>
</dbReference>
<dbReference type="NCBIfam" id="TIGR01171">
    <property type="entry name" value="rplB_bact"/>
    <property type="match status" value="1"/>
</dbReference>
<dbReference type="PANTHER" id="PTHR13691:SF5">
    <property type="entry name" value="LARGE RIBOSOMAL SUBUNIT PROTEIN UL2M"/>
    <property type="match status" value="1"/>
</dbReference>
<dbReference type="PANTHER" id="PTHR13691">
    <property type="entry name" value="RIBOSOMAL PROTEIN L2"/>
    <property type="match status" value="1"/>
</dbReference>
<dbReference type="Pfam" id="PF00181">
    <property type="entry name" value="Ribosomal_L2"/>
    <property type="match status" value="1"/>
</dbReference>
<dbReference type="Pfam" id="PF03947">
    <property type="entry name" value="Ribosomal_L2_C"/>
    <property type="match status" value="1"/>
</dbReference>
<dbReference type="PIRSF" id="PIRSF002158">
    <property type="entry name" value="Ribosomal_L2"/>
    <property type="match status" value="1"/>
</dbReference>
<dbReference type="SMART" id="SM01383">
    <property type="entry name" value="Ribosomal_L2"/>
    <property type="match status" value="1"/>
</dbReference>
<dbReference type="SMART" id="SM01382">
    <property type="entry name" value="Ribosomal_L2_C"/>
    <property type="match status" value="1"/>
</dbReference>
<dbReference type="SUPFAM" id="SSF50249">
    <property type="entry name" value="Nucleic acid-binding proteins"/>
    <property type="match status" value="1"/>
</dbReference>
<dbReference type="SUPFAM" id="SSF50104">
    <property type="entry name" value="Translation proteins SH3-like domain"/>
    <property type="match status" value="1"/>
</dbReference>
<dbReference type="PROSITE" id="PS00467">
    <property type="entry name" value="RIBOSOMAL_L2"/>
    <property type="match status" value="1"/>
</dbReference>
<keyword id="KW-1185">Reference proteome</keyword>
<keyword id="KW-0687">Ribonucleoprotein</keyword>
<keyword id="KW-0689">Ribosomal protein</keyword>
<keyword id="KW-0694">RNA-binding</keyword>
<keyword id="KW-0699">rRNA-binding</keyword>
<name>RL2_HAEIN</name>
<sequence>MAIVKCKPTSAGRRHVVKIVNPELHKGKPYAPLLDTKSKTGGRNNYGRITTRHIGGGHKQHYRLIDFKRNKLDIPAVVERLEYDPNRSANIALVLYKDGERRYILAPKGLSVGDQIQAGINSPIKVGNSLPMRNIPVGSTVHNVELKPGKGGQIARSAGAYVQIIAREGNYVTLRLRSGEMRKVLAECVATIGEVGNSEHMLRVLGKAGANRWRGIRPTVRGTAMNPVDHPHGGGEGRNFGKHPVTPWGVQTKGKKTRHNKRTDKYIVRRRGK</sequence>
<accession>P44343</accession>
<feature type="initiator methionine" description="Removed" evidence="1">
    <location>
        <position position="1"/>
    </location>
</feature>
<feature type="chain" id="PRO_0000129567" description="Large ribosomal subunit protein uL2">
    <location>
        <begin position="2"/>
        <end position="273"/>
    </location>
</feature>
<feature type="region of interest" description="Disordered" evidence="3">
    <location>
        <begin position="221"/>
        <end position="262"/>
    </location>
</feature>
<feature type="compositionally biased region" description="Basic residues" evidence="3">
    <location>
        <begin position="253"/>
        <end position="262"/>
    </location>
</feature>
<gene>
    <name evidence="2" type="primary">rplB</name>
    <name evidence="2" type="synonym">rpl2</name>
    <name type="ordered locus">HI_0780</name>
</gene>
<protein>
    <recommendedName>
        <fullName evidence="2">Large ribosomal subunit protein uL2</fullName>
    </recommendedName>
    <alternativeName>
        <fullName evidence="4">50S ribosomal protein L2</fullName>
    </alternativeName>
</protein>
<reference key="1">
    <citation type="journal article" date="1995" name="Science">
        <title>Whole-genome random sequencing and assembly of Haemophilus influenzae Rd.</title>
        <authorList>
            <person name="Fleischmann R.D."/>
            <person name="Adams M.D."/>
            <person name="White O."/>
            <person name="Clayton R.A."/>
            <person name="Kirkness E.F."/>
            <person name="Kerlavage A.R."/>
            <person name="Bult C.J."/>
            <person name="Tomb J.-F."/>
            <person name="Dougherty B.A."/>
            <person name="Merrick J.M."/>
            <person name="McKenney K."/>
            <person name="Sutton G.G."/>
            <person name="FitzHugh W."/>
            <person name="Fields C.A."/>
            <person name="Gocayne J.D."/>
            <person name="Scott J.D."/>
            <person name="Shirley R."/>
            <person name="Liu L.-I."/>
            <person name="Glodek A."/>
            <person name="Kelley J.M."/>
            <person name="Weidman J.F."/>
            <person name="Phillips C.A."/>
            <person name="Spriggs T."/>
            <person name="Hedblom E."/>
            <person name="Cotton M.D."/>
            <person name="Utterback T.R."/>
            <person name="Hanna M.C."/>
            <person name="Nguyen D.T."/>
            <person name="Saudek D.M."/>
            <person name="Brandon R.C."/>
            <person name="Fine L.D."/>
            <person name="Fritchman J.L."/>
            <person name="Fuhrmann J.L."/>
            <person name="Geoghagen N.S.M."/>
            <person name="Gnehm C.L."/>
            <person name="McDonald L.A."/>
            <person name="Small K.V."/>
            <person name="Fraser C.M."/>
            <person name="Smith H.O."/>
            <person name="Venter J.C."/>
        </authorList>
    </citation>
    <scope>NUCLEOTIDE SEQUENCE [LARGE SCALE GENOMIC DNA]</scope>
    <source>
        <strain>ATCC 51907 / DSM 11121 / KW20 / Rd</strain>
    </source>
</reference>
<comment type="function">
    <text evidence="2">One of the primary rRNA binding proteins. Required for association of the 30S and 50S subunits to form the 70S ribosome, for tRNA binding and peptide bond formation. It has been suggested to have peptidyltransferase activity; this is somewhat controversial. Makes several contacts with the 16S rRNA in the 70S ribosome.</text>
</comment>
<comment type="subunit">
    <text evidence="2">Part of the 50S ribosomal subunit. Forms a bridge to the 30S subunit in the 70S ribosome.</text>
</comment>
<comment type="similarity">
    <text evidence="2">Belongs to the universal ribosomal protein uL2 family.</text>
</comment>
<proteinExistence type="inferred from homology"/>